<reference key="1">
    <citation type="submission" date="2002-12" db="EMBL/GenBank/DDBJ databases">
        <authorList>
            <consortium name="NIH - Xenopus Gene Collection (XGC) project"/>
        </authorList>
    </citation>
    <scope>NUCLEOTIDE SEQUENCE [LARGE SCALE MRNA]</scope>
    <source>
        <tissue>Embryo</tissue>
    </source>
</reference>
<protein>
    <recommendedName>
        <fullName>Actin, cytoplasmic 2</fullName>
        <ecNumber evidence="3">3.6.4.-</ecNumber>
    </recommendedName>
    <alternativeName>
        <fullName>Gamma-actin</fullName>
    </alternativeName>
    <component>
        <recommendedName>
            <fullName>Actin, cytoplasmic 2, N-terminally processed</fullName>
        </recommendedName>
    </component>
</protein>
<sequence>MEEEIAALVIDNGSGMCKAGFAGDDAPRAVFPSIVGRPRHQGVMVGMGQKDSYVGDEAQSKRGILTLKYPIEHGIVTNWDDMEKIWHHTFYNELRVAPEEHPVLLTEAPLNPKANREKMTQIMFETFNTPAMYVAIQAVLSLYASGRTTGIVMDSGDGVTHTVPIYEGYALPHAILRLDLAGRDLTDYLMKILTERGYSFTTTAEREIVRDIKEKLCYVALDFEQEMATAASSSSLEKSYELPDGQVITIGNERFRCPEALFQPSFLGMESCGIHETTFNSIMKCDVDIRKDLYANTVLSGGTTMYPGIADRMQKEITALAPSTMKIKIIAPPERKYSVWIGGSILASLSTFQQMWISKQEYDESGPSIVHRKCF</sequence>
<name>ACTG_XENLA</name>
<dbReference type="EC" id="3.6.4.-" evidence="3"/>
<dbReference type="EMBL" id="BC130155">
    <property type="protein sequence ID" value="AAI30156.1"/>
    <property type="molecule type" value="mRNA"/>
</dbReference>
<dbReference type="RefSeq" id="NP_001091279.1">
    <property type="nucleotide sequence ID" value="NM_001097810.1"/>
</dbReference>
<dbReference type="SMR" id="A2BDB0"/>
<dbReference type="CD-CODE" id="78E86D56">
    <property type="entry name" value="Mitochondrial cloud"/>
</dbReference>
<dbReference type="Proteomes" id="UP000186698">
    <property type="component" value="Unplaced"/>
</dbReference>
<dbReference type="GO" id="GO:0015629">
    <property type="term" value="C:actin cytoskeleton"/>
    <property type="evidence" value="ECO:0000318"/>
    <property type="project" value="GO_Central"/>
</dbReference>
<dbReference type="GO" id="GO:0005884">
    <property type="term" value="C:actin filament"/>
    <property type="evidence" value="ECO:0000318"/>
    <property type="project" value="GO_Central"/>
</dbReference>
<dbReference type="GO" id="GO:0030424">
    <property type="term" value="C:axon"/>
    <property type="evidence" value="ECO:0000318"/>
    <property type="project" value="GO_Central"/>
</dbReference>
<dbReference type="GO" id="GO:0005737">
    <property type="term" value="C:cytoplasm"/>
    <property type="evidence" value="ECO:0000318"/>
    <property type="project" value="GO_Central"/>
</dbReference>
<dbReference type="GO" id="GO:0005856">
    <property type="term" value="C:cytoskeleton"/>
    <property type="evidence" value="ECO:0000250"/>
    <property type="project" value="AgBase"/>
</dbReference>
<dbReference type="GO" id="GO:0097433">
    <property type="term" value="C:dense body"/>
    <property type="evidence" value="ECO:0000250"/>
    <property type="project" value="AgBase"/>
</dbReference>
<dbReference type="GO" id="GO:0005925">
    <property type="term" value="C:focal adhesion"/>
    <property type="evidence" value="ECO:0000250"/>
    <property type="project" value="AgBase"/>
</dbReference>
<dbReference type="GO" id="GO:0016020">
    <property type="term" value="C:membrane"/>
    <property type="evidence" value="ECO:0000318"/>
    <property type="project" value="GO_Central"/>
</dbReference>
<dbReference type="GO" id="GO:0035267">
    <property type="term" value="C:NuA4 histone acetyltransferase complex"/>
    <property type="evidence" value="ECO:0000318"/>
    <property type="project" value="GO_Central"/>
</dbReference>
<dbReference type="GO" id="GO:0005886">
    <property type="term" value="C:plasma membrane"/>
    <property type="evidence" value="ECO:0000250"/>
    <property type="project" value="AgBase"/>
</dbReference>
<dbReference type="GO" id="GO:0045202">
    <property type="term" value="C:synapse"/>
    <property type="evidence" value="ECO:0000318"/>
    <property type="project" value="GO_Central"/>
</dbReference>
<dbReference type="GO" id="GO:0005524">
    <property type="term" value="F:ATP binding"/>
    <property type="evidence" value="ECO:0007669"/>
    <property type="project" value="UniProtKB-KW"/>
</dbReference>
<dbReference type="GO" id="GO:0016787">
    <property type="term" value="F:hydrolase activity"/>
    <property type="evidence" value="ECO:0007669"/>
    <property type="project" value="UniProtKB-KW"/>
</dbReference>
<dbReference type="GO" id="GO:0019901">
    <property type="term" value="F:protein kinase binding"/>
    <property type="evidence" value="ECO:0000318"/>
    <property type="project" value="GO_Central"/>
</dbReference>
<dbReference type="GO" id="GO:0098973">
    <property type="term" value="F:structural constituent of postsynaptic actin cytoskeleton"/>
    <property type="evidence" value="ECO:0000318"/>
    <property type="project" value="GO_Central"/>
</dbReference>
<dbReference type="GO" id="GO:0007409">
    <property type="term" value="P:axonogenesis"/>
    <property type="evidence" value="ECO:0000318"/>
    <property type="project" value="GO_Central"/>
</dbReference>
<dbReference type="GO" id="GO:0048870">
    <property type="term" value="P:cell motility"/>
    <property type="evidence" value="ECO:0000318"/>
    <property type="project" value="GO_Central"/>
</dbReference>
<dbReference type="CDD" id="cd10224">
    <property type="entry name" value="ASKHA_NBD_actin"/>
    <property type="match status" value="1"/>
</dbReference>
<dbReference type="FunFam" id="3.30.420.40:FF:000131">
    <property type="entry name" value="Actin, alpha skeletal muscle"/>
    <property type="match status" value="1"/>
</dbReference>
<dbReference type="FunFam" id="3.30.420.40:FF:000291">
    <property type="entry name" value="Actin, alpha skeletal muscle"/>
    <property type="match status" value="1"/>
</dbReference>
<dbReference type="FunFam" id="3.90.640.10:FF:000047">
    <property type="entry name" value="Actin, alpha skeletal muscle"/>
    <property type="match status" value="1"/>
</dbReference>
<dbReference type="FunFam" id="3.30.420.40:FF:000058">
    <property type="entry name" value="Putative actin-related protein 5"/>
    <property type="match status" value="1"/>
</dbReference>
<dbReference type="Gene3D" id="3.30.420.40">
    <property type="match status" value="2"/>
</dbReference>
<dbReference type="Gene3D" id="3.90.640.10">
    <property type="entry name" value="Actin, Chain A, domain 4"/>
    <property type="match status" value="1"/>
</dbReference>
<dbReference type="InterPro" id="IPR004000">
    <property type="entry name" value="Actin"/>
</dbReference>
<dbReference type="InterPro" id="IPR020902">
    <property type="entry name" value="Actin/actin-like_CS"/>
</dbReference>
<dbReference type="InterPro" id="IPR004001">
    <property type="entry name" value="Actin_CS"/>
</dbReference>
<dbReference type="InterPro" id="IPR043129">
    <property type="entry name" value="ATPase_NBD"/>
</dbReference>
<dbReference type="PANTHER" id="PTHR11937">
    <property type="entry name" value="ACTIN"/>
    <property type="match status" value="1"/>
</dbReference>
<dbReference type="Pfam" id="PF00022">
    <property type="entry name" value="Actin"/>
    <property type="match status" value="1"/>
</dbReference>
<dbReference type="PRINTS" id="PR00190">
    <property type="entry name" value="ACTIN"/>
</dbReference>
<dbReference type="SMART" id="SM00268">
    <property type="entry name" value="ACTIN"/>
    <property type="match status" value="1"/>
</dbReference>
<dbReference type="SUPFAM" id="SSF53067">
    <property type="entry name" value="Actin-like ATPase domain"/>
    <property type="match status" value="2"/>
</dbReference>
<dbReference type="PROSITE" id="PS00406">
    <property type="entry name" value="ACTINS_1"/>
    <property type="match status" value="1"/>
</dbReference>
<dbReference type="PROSITE" id="PS00432">
    <property type="entry name" value="ACTINS_2"/>
    <property type="match status" value="1"/>
</dbReference>
<dbReference type="PROSITE" id="PS01132">
    <property type="entry name" value="ACTINS_ACT_LIKE"/>
    <property type="match status" value="1"/>
</dbReference>
<organism>
    <name type="scientific">Xenopus laevis</name>
    <name type="common">African clawed frog</name>
    <dbReference type="NCBI Taxonomy" id="8355"/>
    <lineage>
        <taxon>Eukaryota</taxon>
        <taxon>Metazoa</taxon>
        <taxon>Chordata</taxon>
        <taxon>Craniata</taxon>
        <taxon>Vertebrata</taxon>
        <taxon>Euteleostomi</taxon>
        <taxon>Amphibia</taxon>
        <taxon>Batrachia</taxon>
        <taxon>Anura</taxon>
        <taxon>Pipoidea</taxon>
        <taxon>Pipidae</taxon>
        <taxon>Xenopodinae</taxon>
        <taxon>Xenopus</taxon>
        <taxon>Xenopus</taxon>
    </lineage>
</organism>
<comment type="function">
    <text evidence="2">Actins are highly conserved proteins that are involved in various types of cell motility and are ubiquitously expressed in all eukaryotic cells.</text>
</comment>
<comment type="catalytic activity">
    <reaction evidence="3">
        <text>ATP + H2O = ADP + phosphate + H(+)</text>
        <dbReference type="Rhea" id="RHEA:13065"/>
        <dbReference type="ChEBI" id="CHEBI:15377"/>
        <dbReference type="ChEBI" id="CHEBI:15378"/>
        <dbReference type="ChEBI" id="CHEBI:30616"/>
        <dbReference type="ChEBI" id="CHEBI:43474"/>
        <dbReference type="ChEBI" id="CHEBI:456216"/>
    </reaction>
</comment>
<comment type="subunit">
    <text>Polymerization of globular actin (G-actin) leads to a structural filament (F-actin) in the form of a two-stranded helix. Each actin can bind to 4 others.</text>
</comment>
<comment type="subcellular location">
    <subcellularLocation>
        <location evidence="2">Cytoplasm</location>
        <location evidence="2">Cytoskeleton</location>
    </subcellularLocation>
</comment>
<comment type="PTM">
    <molecule>Actin, cytoplasmic 2</molecule>
    <text evidence="2">N-terminal cleavage of acetylated methionine of immature cytoplasmic actin by ACTMAP.</text>
</comment>
<comment type="PTM">
    <text evidence="1">Oxidation of Met-44 and Met-47 by MICALs (mical1, mical2 or mical3) to form methionine sulfoxide promotes actin filament depolymerization. Mical1 and mical2 produce the (R)-S-oxide form. The (R)-S-oxide form is reverted by msrb1 and msrb2, which promote actin repolymerization.</text>
</comment>
<comment type="PTM">
    <text evidence="2">Methylated at His-73 by SETD3.</text>
</comment>
<comment type="miscellaneous">
    <text>In vertebrates 3 main groups of actin isoforms, alpha, beta and gamma have been identified. The alpha actins are found in muscle tissues and are a major constituent of the contractile apparatus. The beta and gamma actins coexist in most cell types as components of the cytoskeleton and as mediators of internal cell motility.</text>
</comment>
<comment type="similarity">
    <text evidence="4">Belongs to the actin family.</text>
</comment>
<proteinExistence type="evidence at transcript level"/>
<feature type="chain" id="PRO_0000367108" description="Actin, cytoplasmic 2">
    <location>
        <begin position="1"/>
        <end position="375"/>
    </location>
</feature>
<feature type="initiator methionine" description="Removed; alternate" evidence="2">
    <location>
        <position position="1"/>
    </location>
</feature>
<feature type="chain" id="PRO_0000280383" description="Actin, cytoplasmic 2, N-terminally processed">
    <location>
        <begin position="2"/>
        <end position="375"/>
    </location>
</feature>
<feature type="modified residue" description="N-acetylmethionine; in Actin, cytoplasmic 2; alternate" evidence="2">
    <location>
        <position position="1"/>
    </location>
</feature>
<feature type="modified residue" description="N-acetylglutamate; in Actin, cytoplasmic 2, N-terminally processed" evidence="2">
    <location>
        <position position="2"/>
    </location>
</feature>
<feature type="modified residue" description="Methionine (R)-sulfoxide" evidence="1">
    <location>
        <position position="44"/>
    </location>
</feature>
<feature type="modified residue" description="Methionine (R)-sulfoxide" evidence="1">
    <location>
        <position position="47"/>
    </location>
</feature>
<feature type="modified residue" description="Tele-methylhistidine" evidence="1">
    <location>
        <position position="73"/>
    </location>
</feature>
<accession>A2BDB0</accession>
<evidence type="ECO:0000250" key="1">
    <source>
        <dbReference type="UniProtKB" id="P63260"/>
    </source>
</evidence>
<evidence type="ECO:0000250" key="2">
    <source>
        <dbReference type="UniProtKB" id="P63261"/>
    </source>
</evidence>
<evidence type="ECO:0000250" key="3">
    <source>
        <dbReference type="UniProtKB" id="P68137"/>
    </source>
</evidence>
<evidence type="ECO:0000305" key="4"/>
<gene>
    <name type="primary">actg1</name>
</gene>
<keyword id="KW-0007">Acetylation</keyword>
<keyword id="KW-0067">ATP-binding</keyword>
<keyword id="KW-0963">Cytoplasm</keyword>
<keyword id="KW-0206">Cytoskeleton</keyword>
<keyword id="KW-0378">Hydrolase</keyword>
<keyword id="KW-0488">Methylation</keyword>
<keyword id="KW-0547">Nucleotide-binding</keyword>
<keyword id="KW-0558">Oxidation</keyword>
<keyword id="KW-1185">Reference proteome</keyword>